<name>RL36_ACET2</name>
<organism>
    <name type="scientific">Acetivibrio thermocellus (strain ATCC 27405 / DSM 1237 / JCM 9322 / NBRC 103400 / NCIMB 10682 / NRRL B-4536 / VPI 7372)</name>
    <name type="common">Clostridium thermocellum</name>
    <dbReference type="NCBI Taxonomy" id="203119"/>
    <lineage>
        <taxon>Bacteria</taxon>
        <taxon>Bacillati</taxon>
        <taxon>Bacillota</taxon>
        <taxon>Clostridia</taxon>
        <taxon>Eubacteriales</taxon>
        <taxon>Oscillospiraceae</taxon>
        <taxon>Acetivibrio</taxon>
    </lineage>
</organism>
<sequence length="37" mass="4376">MKVRPSVKVICEKCKIIRRKGRVMVICQNPKHKQRQG</sequence>
<feature type="chain" id="PRO_0000302187" description="Large ribosomal subunit protein bL36">
    <location>
        <begin position="1"/>
        <end position="37"/>
    </location>
</feature>
<gene>
    <name evidence="1" type="primary">rpmJ</name>
    <name type="ordered locus">Cthe_2928</name>
</gene>
<reference key="1">
    <citation type="submission" date="2007-02" db="EMBL/GenBank/DDBJ databases">
        <title>Complete sequence of Clostridium thermocellum ATCC 27405.</title>
        <authorList>
            <consortium name="US DOE Joint Genome Institute"/>
            <person name="Copeland A."/>
            <person name="Lucas S."/>
            <person name="Lapidus A."/>
            <person name="Barry K."/>
            <person name="Detter J.C."/>
            <person name="Glavina del Rio T."/>
            <person name="Hammon N."/>
            <person name="Israni S."/>
            <person name="Dalin E."/>
            <person name="Tice H."/>
            <person name="Pitluck S."/>
            <person name="Chertkov O."/>
            <person name="Brettin T."/>
            <person name="Bruce D."/>
            <person name="Han C."/>
            <person name="Tapia R."/>
            <person name="Gilna P."/>
            <person name="Schmutz J."/>
            <person name="Larimer F."/>
            <person name="Land M."/>
            <person name="Hauser L."/>
            <person name="Kyrpides N."/>
            <person name="Mikhailova N."/>
            <person name="Wu J.H.D."/>
            <person name="Newcomb M."/>
            <person name="Richardson P."/>
        </authorList>
    </citation>
    <scope>NUCLEOTIDE SEQUENCE [LARGE SCALE GENOMIC DNA]</scope>
    <source>
        <strain>ATCC 27405 / DSM 1237 / JCM 9322 / NBRC 103400 / NCIMB 10682 / NRRL B-4536 / VPI 7372</strain>
    </source>
</reference>
<dbReference type="EMBL" id="CP000568">
    <property type="protein sequence ID" value="ABN54126.1"/>
    <property type="molecule type" value="Genomic_DNA"/>
</dbReference>
<dbReference type="RefSeq" id="WP_003514672.1">
    <property type="nucleotide sequence ID" value="NC_009012.1"/>
</dbReference>
<dbReference type="SMR" id="A3DJJ7"/>
<dbReference type="STRING" id="203119.Cthe_2928"/>
<dbReference type="GeneID" id="35805610"/>
<dbReference type="KEGG" id="cth:Cthe_2928"/>
<dbReference type="eggNOG" id="COG0257">
    <property type="taxonomic scope" value="Bacteria"/>
</dbReference>
<dbReference type="HOGENOM" id="CLU_135723_6_2_9"/>
<dbReference type="OrthoDB" id="9802520at2"/>
<dbReference type="Proteomes" id="UP000002145">
    <property type="component" value="Chromosome"/>
</dbReference>
<dbReference type="GO" id="GO:0005737">
    <property type="term" value="C:cytoplasm"/>
    <property type="evidence" value="ECO:0007669"/>
    <property type="project" value="UniProtKB-ARBA"/>
</dbReference>
<dbReference type="GO" id="GO:1990904">
    <property type="term" value="C:ribonucleoprotein complex"/>
    <property type="evidence" value="ECO:0007669"/>
    <property type="project" value="UniProtKB-KW"/>
</dbReference>
<dbReference type="GO" id="GO:0005840">
    <property type="term" value="C:ribosome"/>
    <property type="evidence" value="ECO:0007669"/>
    <property type="project" value="UniProtKB-KW"/>
</dbReference>
<dbReference type="GO" id="GO:0003735">
    <property type="term" value="F:structural constituent of ribosome"/>
    <property type="evidence" value="ECO:0007669"/>
    <property type="project" value="InterPro"/>
</dbReference>
<dbReference type="GO" id="GO:0006412">
    <property type="term" value="P:translation"/>
    <property type="evidence" value="ECO:0007669"/>
    <property type="project" value="UniProtKB-UniRule"/>
</dbReference>
<dbReference type="HAMAP" id="MF_00251">
    <property type="entry name" value="Ribosomal_bL36"/>
    <property type="match status" value="1"/>
</dbReference>
<dbReference type="InterPro" id="IPR000473">
    <property type="entry name" value="Ribosomal_bL36"/>
</dbReference>
<dbReference type="InterPro" id="IPR035977">
    <property type="entry name" value="Ribosomal_bL36_sp"/>
</dbReference>
<dbReference type="NCBIfam" id="TIGR01022">
    <property type="entry name" value="rpmJ_bact"/>
    <property type="match status" value="1"/>
</dbReference>
<dbReference type="PANTHER" id="PTHR42888">
    <property type="entry name" value="50S RIBOSOMAL PROTEIN L36, CHLOROPLASTIC"/>
    <property type="match status" value="1"/>
</dbReference>
<dbReference type="PANTHER" id="PTHR42888:SF1">
    <property type="entry name" value="LARGE RIBOSOMAL SUBUNIT PROTEIN BL36C"/>
    <property type="match status" value="1"/>
</dbReference>
<dbReference type="Pfam" id="PF00444">
    <property type="entry name" value="Ribosomal_L36"/>
    <property type="match status" value="1"/>
</dbReference>
<dbReference type="SUPFAM" id="SSF57840">
    <property type="entry name" value="Ribosomal protein L36"/>
    <property type="match status" value="1"/>
</dbReference>
<dbReference type="PROSITE" id="PS00828">
    <property type="entry name" value="RIBOSOMAL_L36"/>
    <property type="match status" value="1"/>
</dbReference>
<proteinExistence type="inferred from homology"/>
<evidence type="ECO:0000255" key="1">
    <source>
        <dbReference type="HAMAP-Rule" id="MF_00251"/>
    </source>
</evidence>
<evidence type="ECO:0000305" key="2"/>
<keyword id="KW-1185">Reference proteome</keyword>
<keyword id="KW-0687">Ribonucleoprotein</keyword>
<keyword id="KW-0689">Ribosomal protein</keyword>
<accession>A3DJJ7</accession>
<comment type="similarity">
    <text evidence="1">Belongs to the bacterial ribosomal protein bL36 family.</text>
</comment>
<protein>
    <recommendedName>
        <fullName evidence="1">Large ribosomal subunit protein bL36</fullName>
    </recommendedName>
    <alternativeName>
        <fullName evidence="2">50S ribosomal protein L36</fullName>
    </alternativeName>
</protein>